<sequence>MLIAQRPTLTEDVVDEYRSRFVIEPLEPGFGYTLGNSLRRTLLSSIPGAAVTSLRIDGVLHEFTSVPGVKEDVTEIVLNVKNLVVSSEHDEPVVMYLRKQGPGAVTAADIAPPAGVEVHNPDLHIATLNAKGKLELELTVERGRGYVSAAQNKTGEQEIGRIPVDSIYSPVLKVTYKVEATRVEQRTDFDRLVVDVETKHAISPRDAVASAGKTLTELFGLARELNVEAEGIDMGPSPTDAALAADLALEIEALDLTVRSYNCLKREGIHSVGELVSRSEADLLDIRNFGQKSIDEVKAKLVGMGLHLKDSPPGFDPSAVVNDFEDDDTSFAEDEQL</sequence>
<name>RPOA_KINRD</name>
<proteinExistence type="inferred from homology"/>
<evidence type="ECO:0000255" key="1">
    <source>
        <dbReference type="HAMAP-Rule" id="MF_00059"/>
    </source>
</evidence>
<evidence type="ECO:0000256" key="2">
    <source>
        <dbReference type="SAM" id="MobiDB-lite"/>
    </source>
</evidence>
<keyword id="KW-0240">DNA-directed RNA polymerase</keyword>
<keyword id="KW-0548">Nucleotidyltransferase</keyword>
<keyword id="KW-1185">Reference proteome</keyword>
<keyword id="KW-0804">Transcription</keyword>
<keyword id="KW-0808">Transferase</keyword>
<accession>A6W5W5</accession>
<comment type="function">
    <text evidence="1">DNA-dependent RNA polymerase catalyzes the transcription of DNA into RNA using the four ribonucleoside triphosphates as substrates.</text>
</comment>
<comment type="catalytic activity">
    <reaction evidence="1">
        <text>RNA(n) + a ribonucleoside 5'-triphosphate = RNA(n+1) + diphosphate</text>
        <dbReference type="Rhea" id="RHEA:21248"/>
        <dbReference type="Rhea" id="RHEA-COMP:14527"/>
        <dbReference type="Rhea" id="RHEA-COMP:17342"/>
        <dbReference type="ChEBI" id="CHEBI:33019"/>
        <dbReference type="ChEBI" id="CHEBI:61557"/>
        <dbReference type="ChEBI" id="CHEBI:140395"/>
        <dbReference type="EC" id="2.7.7.6"/>
    </reaction>
</comment>
<comment type="subunit">
    <text evidence="1">Homodimer. The RNAP catalytic core consists of 2 alpha, 1 beta, 1 beta' and 1 omega subunit. When a sigma factor is associated with the core the holoenzyme is formed, which can initiate transcription.</text>
</comment>
<comment type="domain">
    <text evidence="1">The N-terminal domain is essential for RNAP assembly and basal transcription, whereas the C-terminal domain is involved in interaction with transcriptional regulators and with upstream promoter elements.</text>
</comment>
<comment type="similarity">
    <text evidence="1">Belongs to the RNA polymerase alpha chain family.</text>
</comment>
<gene>
    <name evidence="1" type="primary">rpoA</name>
    <name type="ordered locus">Krad_0715</name>
</gene>
<organism>
    <name type="scientific">Kineococcus radiotolerans (strain ATCC BAA-149 / DSM 14245 / SRS30216)</name>
    <dbReference type="NCBI Taxonomy" id="266940"/>
    <lineage>
        <taxon>Bacteria</taxon>
        <taxon>Bacillati</taxon>
        <taxon>Actinomycetota</taxon>
        <taxon>Actinomycetes</taxon>
        <taxon>Kineosporiales</taxon>
        <taxon>Kineosporiaceae</taxon>
        <taxon>Kineococcus</taxon>
    </lineage>
</organism>
<feature type="chain" id="PRO_1000075010" description="DNA-directed RNA polymerase subunit alpha">
    <location>
        <begin position="1"/>
        <end position="337"/>
    </location>
</feature>
<feature type="region of interest" description="Alpha N-terminal domain (alpha-NTD)" evidence="1">
    <location>
        <begin position="1"/>
        <end position="226"/>
    </location>
</feature>
<feature type="region of interest" description="Alpha C-terminal domain (alpha-CTD)" evidence="1">
    <location>
        <begin position="243"/>
        <end position="337"/>
    </location>
</feature>
<feature type="region of interest" description="Disordered" evidence="2">
    <location>
        <begin position="315"/>
        <end position="337"/>
    </location>
</feature>
<feature type="compositionally biased region" description="Acidic residues" evidence="2">
    <location>
        <begin position="323"/>
        <end position="337"/>
    </location>
</feature>
<reference key="1">
    <citation type="journal article" date="2008" name="PLoS ONE">
        <title>Survival in nuclear waste, extreme resistance, and potential applications gleaned from the genome sequence of Kineococcus radiotolerans SRS30216.</title>
        <authorList>
            <person name="Bagwell C.E."/>
            <person name="Bhat S."/>
            <person name="Hawkins G.M."/>
            <person name="Smith B.W."/>
            <person name="Biswas T."/>
            <person name="Hoover T.R."/>
            <person name="Saunders E."/>
            <person name="Han C.S."/>
            <person name="Tsodikov O.V."/>
            <person name="Shimkets L.J."/>
        </authorList>
    </citation>
    <scope>NUCLEOTIDE SEQUENCE [LARGE SCALE GENOMIC DNA]</scope>
    <source>
        <strain>ATCC BAA-149 / DSM 14245 / SRS30216</strain>
    </source>
</reference>
<dbReference type="EC" id="2.7.7.6" evidence="1"/>
<dbReference type="EMBL" id="CP000750">
    <property type="protein sequence ID" value="ABS02204.1"/>
    <property type="molecule type" value="Genomic_DNA"/>
</dbReference>
<dbReference type="RefSeq" id="WP_012084951.1">
    <property type="nucleotide sequence ID" value="NC_009664.2"/>
</dbReference>
<dbReference type="SMR" id="A6W5W5"/>
<dbReference type="STRING" id="266940.Krad_0715"/>
<dbReference type="KEGG" id="kra:Krad_0715"/>
<dbReference type="eggNOG" id="COG0202">
    <property type="taxonomic scope" value="Bacteria"/>
</dbReference>
<dbReference type="HOGENOM" id="CLU_053084_0_1_11"/>
<dbReference type="OrthoDB" id="9805706at2"/>
<dbReference type="Proteomes" id="UP000001116">
    <property type="component" value="Chromosome"/>
</dbReference>
<dbReference type="GO" id="GO:0005737">
    <property type="term" value="C:cytoplasm"/>
    <property type="evidence" value="ECO:0007669"/>
    <property type="project" value="UniProtKB-ARBA"/>
</dbReference>
<dbReference type="GO" id="GO:0000428">
    <property type="term" value="C:DNA-directed RNA polymerase complex"/>
    <property type="evidence" value="ECO:0007669"/>
    <property type="project" value="UniProtKB-KW"/>
</dbReference>
<dbReference type="GO" id="GO:0003677">
    <property type="term" value="F:DNA binding"/>
    <property type="evidence" value="ECO:0007669"/>
    <property type="project" value="UniProtKB-UniRule"/>
</dbReference>
<dbReference type="GO" id="GO:0003899">
    <property type="term" value="F:DNA-directed RNA polymerase activity"/>
    <property type="evidence" value="ECO:0007669"/>
    <property type="project" value="UniProtKB-UniRule"/>
</dbReference>
<dbReference type="GO" id="GO:0046983">
    <property type="term" value="F:protein dimerization activity"/>
    <property type="evidence" value="ECO:0007669"/>
    <property type="project" value="InterPro"/>
</dbReference>
<dbReference type="GO" id="GO:0006351">
    <property type="term" value="P:DNA-templated transcription"/>
    <property type="evidence" value="ECO:0007669"/>
    <property type="project" value="UniProtKB-UniRule"/>
</dbReference>
<dbReference type="CDD" id="cd06928">
    <property type="entry name" value="RNAP_alpha_NTD"/>
    <property type="match status" value="1"/>
</dbReference>
<dbReference type="FunFam" id="1.10.150.20:FF:000001">
    <property type="entry name" value="DNA-directed RNA polymerase subunit alpha"/>
    <property type="match status" value="1"/>
</dbReference>
<dbReference type="FunFam" id="2.170.120.12:FF:000001">
    <property type="entry name" value="DNA-directed RNA polymerase subunit alpha"/>
    <property type="match status" value="1"/>
</dbReference>
<dbReference type="Gene3D" id="1.10.150.20">
    <property type="entry name" value="5' to 3' exonuclease, C-terminal subdomain"/>
    <property type="match status" value="1"/>
</dbReference>
<dbReference type="Gene3D" id="2.170.120.12">
    <property type="entry name" value="DNA-directed RNA polymerase, insert domain"/>
    <property type="match status" value="1"/>
</dbReference>
<dbReference type="Gene3D" id="3.30.1360.10">
    <property type="entry name" value="RNA polymerase, RBP11-like subunit"/>
    <property type="match status" value="1"/>
</dbReference>
<dbReference type="HAMAP" id="MF_00059">
    <property type="entry name" value="RNApol_bact_RpoA"/>
    <property type="match status" value="1"/>
</dbReference>
<dbReference type="InterPro" id="IPR011262">
    <property type="entry name" value="DNA-dir_RNA_pol_insert"/>
</dbReference>
<dbReference type="InterPro" id="IPR011263">
    <property type="entry name" value="DNA-dir_RNA_pol_RpoA/D/Rpb3"/>
</dbReference>
<dbReference type="InterPro" id="IPR011773">
    <property type="entry name" value="DNA-dir_RpoA"/>
</dbReference>
<dbReference type="InterPro" id="IPR036603">
    <property type="entry name" value="RBP11-like"/>
</dbReference>
<dbReference type="InterPro" id="IPR011260">
    <property type="entry name" value="RNAP_asu_C"/>
</dbReference>
<dbReference type="InterPro" id="IPR036643">
    <property type="entry name" value="RNApol_insert_sf"/>
</dbReference>
<dbReference type="NCBIfam" id="NF003513">
    <property type="entry name" value="PRK05182.1-2"/>
    <property type="match status" value="1"/>
</dbReference>
<dbReference type="NCBIfam" id="NF003514">
    <property type="entry name" value="PRK05182.1-4"/>
    <property type="match status" value="1"/>
</dbReference>
<dbReference type="NCBIfam" id="NF003519">
    <property type="entry name" value="PRK05182.2-5"/>
    <property type="match status" value="1"/>
</dbReference>
<dbReference type="NCBIfam" id="TIGR02027">
    <property type="entry name" value="rpoA"/>
    <property type="match status" value="1"/>
</dbReference>
<dbReference type="Pfam" id="PF01000">
    <property type="entry name" value="RNA_pol_A_bac"/>
    <property type="match status" value="1"/>
</dbReference>
<dbReference type="Pfam" id="PF03118">
    <property type="entry name" value="RNA_pol_A_CTD"/>
    <property type="match status" value="1"/>
</dbReference>
<dbReference type="Pfam" id="PF01193">
    <property type="entry name" value="RNA_pol_L"/>
    <property type="match status" value="1"/>
</dbReference>
<dbReference type="SMART" id="SM00662">
    <property type="entry name" value="RPOLD"/>
    <property type="match status" value="1"/>
</dbReference>
<dbReference type="SUPFAM" id="SSF47789">
    <property type="entry name" value="C-terminal domain of RNA polymerase alpha subunit"/>
    <property type="match status" value="1"/>
</dbReference>
<dbReference type="SUPFAM" id="SSF56553">
    <property type="entry name" value="Insert subdomain of RNA polymerase alpha subunit"/>
    <property type="match status" value="1"/>
</dbReference>
<dbReference type="SUPFAM" id="SSF55257">
    <property type="entry name" value="RBP11-like subunits of RNA polymerase"/>
    <property type="match status" value="1"/>
</dbReference>
<protein>
    <recommendedName>
        <fullName evidence="1">DNA-directed RNA polymerase subunit alpha</fullName>
        <shortName evidence="1">RNAP subunit alpha</shortName>
        <ecNumber evidence="1">2.7.7.6</ecNumber>
    </recommendedName>
    <alternativeName>
        <fullName evidence="1">RNA polymerase subunit alpha</fullName>
    </alternativeName>
    <alternativeName>
        <fullName evidence="1">Transcriptase subunit alpha</fullName>
    </alternativeName>
</protein>